<comment type="function">
    <text evidence="4">Plays a major role as delta(8)-fatty-acid desaturase which introduces a double bond at the 8-position in the long-chain base (LCB) of ceramides with or without a hydroxy group at the 4-position. The enzyme produces both the 8E and 8Z isomers (in a 4:1 ratio). This structural modification contributes to the quantitative partitioning of ceramides between the two major sphingolipid classes, glucosylceramides and glycosylinositolphosphoryl ceramides. Sphingolipids are important membrane components involved in environmental stress responses, such as resistance to chilling, and act as cell signaling molecules.</text>
</comment>
<comment type="catalytic activity">
    <reaction evidence="4">
        <text>an N-acyl-(4R)-4-hydroxysphinganine + 2 Fe(II)-[cytochrome b5] + O2 + 2 H(+) = a (4R,8E)-4-hydroxysphingenine ceramide + 2 Fe(III)-[cytochrome b5] + 2 H2O</text>
        <dbReference type="Rhea" id="RHEA:46268"/>
        <dbReference type="Rhea" id="RHEA-COMP:10438"/>
        <dbReference type="Rhea" id="RHEA-COMP:10439"/>
        <dbReference type="ChEBI" id="CHEBI:15377"/>
        <dbReference type="ChEBI" id="CHEBI:15378"/>
        <dbReference type="ChEBI" id="CHEBI:15379"/>
        <dbReference type="ChEBI" id="CHEBI:29033"/>
        <dbReference type="ChEBI" id="CHEBI:29034"/>
        <dbReference type="ChEBI" id="CHEBI:31998"/>
        <dbReference type="ChEBI" id="CHEBI:50934"/>
        <dbReference type="EC" id="1.14.19.29"/>
    </reaction>
</comment>
<comment type="catalytic activity">
    <reaction evidence="4">
        <text>an N-acyl-(4R)-4-hydroxysphinganine + 2 Fe(II)-[cytochrome b5] + O2 + 2 H(+) = a (4R,8Z)-4-hydroxysphing-8-enine ceramide + 2 Fe(III)-[cytochrome b5] + 2 H2O</text>
        <dbReference type="Rhea" id="RHEA:46272"/>
        <dbReference type="Rhea" id="RHEA-COMP:10438"/>
        <dbReference type="Rhea" id="RHEA-COMP:10439"/>
        <dbReference type="ChEBI" id="CHEBI:15377"/>
        <dbReference type="ChEBI" id="CHEBI:15378"/>
        <dbReference type="ChEBI" id="CHEBI:15379"/>
        <dbReference type="ChEBI" id="CHEBI:29033"/>
        <dbReference type="ChEBI" id="CHEBI:29034"/>
        <dbReference type="ChEBI" id="CHEBI:31998"/>
        <dbReference type="ChEBI" id="CHEBI:85951"/>
        <dbReference type="EC" id="1.14.19.29"/>
    </reaction>
</comment>
<comment type="cofactor">
    <cofactor evidence="1">
        <name>Fe cation</name>
        <dbReference type="ChEBI" id="CHEBI:24875"/>
    </cofactor>
</comment>
<comment type="subcellular location">
    <subcellularLocation>
        <location evidence="6">Endoplasmic reticulum membrane</location>
        <topology evidence="5">Multi-pass membrane protein</topology>
    </subcellularLocation>
</comment>
<comment type="tissue specificity">
    <text evidence="4">Highly expressed in flowers and siliques. Expressed at low levels in roots, leaves and stems.</text>
</comment>
<comment type="domain">
    <text evidence="1">The histidine box domains may contain the active site and/or be involved in metal ion binding.</text>
</comment>
<comment type="disruption phenotype">
    <text evidence="4">No visible phenotype under normal growth conditions, but mutant plants show enhanced sensitivity to prolonged low-temperature exposure.</text>
</comment>
<comment type="similarity">
    <text evidence="5">Belongs to the fatty acid desaturase type 1 family.</text>
</comment>
<comment type="sequence caution" evidence="5">
    <conflict type="frameshift">
        <sequence resource="EMBL" id="AK228217"/>
    </conflict>
</comment>
<sequence>MADQTKKRYVTSEDLKKHNKPGDLWISIQGKVYDVSDWVKSHPGGEAAILNLAGQDVTDAFIAYHPGTAWHHLEKLHNGYHVRDHHVSDVSRDYRRLAAEFSKRGLFDKKGHVTLYTLTCVGVMLAAVLYGVLACTSIWAHLISAVLLGLLWIQSAYVGHDSGHYTVTSTKPCNKLIQLLSGNCLTGISIAWWKWTHNAHHIACNSLDHDPDLQHIPIFAVSTKFFNSMTSRFYGRKLTFDPLARFLISYQHWTFYPVMCVGRINLFIQTFLLLFSKRHVPDRALNIAGILVFWTWFPLLVSFLPNWQERFIFVFVSFAVTAIQHVQFCLNHFAADVYTGPPNGNDWFEKQTAGTLDISCRSFMDWFFGGLQFQLEHHLFPRLPRCHLRTVSPVVKELCKKHNLPYRSLSWWEANVWTIRTLKNAAIQARDATNPVLKNLLWEAVNTHG</sequence>
<protein>
    <recommendedName>
        <fullName>Delta(8)-fatty-acid desaturase 2</fullName>
        <ecNumber evidence="4">1.14.19.29</ecNumber>
    </recommendedName>
    <alternativeName>
        <fullName>Delta(8)-sphingolipid desaturase 2</fullName>
    </alternativeName>
    <alternativeName>
        <fullName>Sphingoid long-chain base desaturase 2</fullName>
        <shortName>Sphingoid LCB desaturase 2</shortName>
    </alternativeName>
    <alternativeName>
        <fullName>Sphingolipid 8-(E/Z)-desaturase 2</fullName>
    </alternativeName>
</protein>
<evidence type="ECO:0000250" key="1"/>
<evidence type="ECO:0000255" key="2"/>
<evidence type="ECO:0000255" key="3">
    <source>
        <dbReference type="PROSITE-ProRule" id="PRU00279"/>
    </source>
</evidence>
<evidence type="ECO:0000269" key="4">
    <source>
    </source>
</evidence>
<evidence type="ECO:0000305" key="5"/>
<evidence type="ECO:0000305" key="6">
    <source>
    </source>
</evidence>
<dbReference type="EC" id="1.14.19.29" evidence="4"/>
<dbReference type="EMBL" id="AC005397">
    <property type="status" value="NOT_ANNOTATED_CDS"/>
    <property type="molecule type" value="Genomic_DNA"/>
</dbReference>
<dbReference type="EMBL" id="CP002685">
    <property type="protein sequence ID" value="AEC10657.1"/>
    <property type="molecule type" value="Genomic_DNA"/>
</dbReference>
<dbReference type="EMBL" id="AK228217">
    <property type="status" value="NOT_ANNOTATED_CDS"/>
    <property type="molecule type" value="mRNA"/>
</dbReference>
<dbReference type="RefSeq" id="NP_182144.1">
    <property type="nucleotide sequence ID" value="NM_130183.4"/>
</dbReference>
<dbReference type="SMR" id="Q3EBF7"/>
<dbReference type="FunCoup" id="Q3EBF7">
    <property type="interactions" value="1202"/>
</dbReference>
<dbReference type="STRING" id="3702.Q3EBF7"/>
<dbReference type="PaxDb" id="3702-AT2G46210.1"/>
<dbReference type="ProteomicsDB" id="228439"/>
<dbReference type="EnsemblPlants" id="AT2G46210.1">
    <property type="protein sequence ID" value="AT2G46210.1"/>
    <property type="gene ID" value="AT2G46210"/>
</dbReference>
<dbReference type="GeneID" id="819228"/>
<dbReference type="Gramene" id="AT2G46210.1">
    <property type="protein sequence ID" value="AT2G46210.1"/>
    <property type="gene ID" value="AT2G46210"/>
</dbReference>
<dbReference type="KEGG" id="ath:AT2G46210"/>
<dbReference type="Araport" id="AT2G46210"/>
<dbReference type="TAIR" id="AT2G46210">
    <property type="gene designation" value="SLD2"/>
</dbReference>
<dbReference type="eggNOG" id="KOG4232">
    <property type="taxonomic scope" value="Eukaryota"/>
</dbReference>
<dbReference type="HOGENOM" id="CLU_016265_2_0_1"/>
<dbReference type="InParanoid" id="Q3EBF7"/>
<dbReference type="OMA" id="FGGMQYQ"/>
<dbReference type="OrthoDB" id="260091at2759"/>
<dbReference type="PhylomeDB" id="Q3EBF7"/>
<dbReference type="BRENDA" id="1.14.19.29">
    <property type="organism ID" value="399"/>
</dbReference>
<dbReference type="BRENDA" id="1.14.19.4">
    <property type="organism ID" value="399"/>
</dbReference>
<dbReference type="PRO" id="PR:Q3EBF7"/>
<dbReference type="Proteomes" id="UP000006548">
    <property type="component" value="Chromosome 2"/>
</dbReference>
<dbReference type="ExpressionAtlas" id="Q3EBF7">
    <property type="expression patterns" value="baseline and differential"/>
</dbReference>
<dbReference type="GO" id="GO:0005783">
    <property type="term" value="C:endoplasmic reticulum"/>
    <property type="evidence" value="ECO:0000314"/>
    <property type="project" value="UniProtKB"/>
</dbReference>
<dbReference type="GO" id="GO:0005789">
    <property type="term" value="C:endoplasmic reticulum membrane"/>
    <property type="evidence" value="ECO:0007669"/>
    <property type="project" value="UniProtKB-SubCell"/>
</dbReference>
<dbReference type="GO" id="GO:0046872">
    <property type="term" value="F:metal ion binding"/>
    <property type="evidence" value="ECO:0007669"/>
    <property type="project" value="UniProtKB-KW"/>
</dbReference>
<dbReference type="GO" id="GO:0052631">
    <property type="term" value="F:sphingolipid 8-(E/Z)-desaturase activity"/>
    <property type="evidence" value="ECO:0000315"/>
    <property type="project" value="UniProtKB"/>
</dbReference>
<dbReference type="GO" id="GO:0070417">
    <property type="term" value="P:cellular response to cold"/>
    <property type="evidence" value="ECO:0000315"/>
    <property type="project" value="UniProtKB"/>
</dbReference>
<dbReference type="GO" id="GO:0030148">
    <property type="term" value="P:sphingolipid biosynthetic process"/>
    <property type="evidence" value="ECO:0000315"/>
    <property type="project" value="UniProtKB"/>
</dbReference>
<dbReference type="CDD" id="cd03506">
    <property type="entry name" value="Delta6-FADS-like"/>
    <property type="match status" value="1"/>
</dbReference>
<dbReference type="FunFam" id="3.10.120.10:FF:000021">
    <property type="entry name" value="Delta(8)-fatty-acid desaturase 2"/>
    <property type="match status" value="1"/>
</dbReference>
<dbReference type="Gene3D" id="3.10.120.10">
    <property type="entry name" value="Cytochrome b5-like heme/steroid binding domain"/>
    <property type="match status" value="1"/>
</dbReference>
<dbReference type="InterPro" id="IPR001199">
    <property type="entry name" value="Cyt_B5-like_heme/steroid-bd"/>
</dbReference>
<dbReference type="InterPro" id="IPR036400">
    <property type="entry name" value="Cyt_B5-like_heme/steroid_sf"/>
</dbReference>
<dbReference type="InterPro" id="IPR005804">
    <property type="entry name" value="FA_desaturase_dom"/>
</dbReference>
<dbReference type="InterPro" id="IPR012171">
    <property type="entry name" value="Fatty_acid_desaturase"/>
</dbReference>
<dbReference type="PANTHER" id="PTHR19353:SF28">
    <property type="entry name" value="DELTA(8)-FATTY-ACID DESATURASE 2"/>
    <property type="match status" value="1"/>
</dbReference>
<dbReference type="PANTHER" id="PTHR19353">
    <property type="entry name" value="FATTY ACID DESATURASE 2"/>
    <property type="match status" value="1"/>
</dbReference>
<dbReference type="Pfam" id="PF00173">
    <property type="entry name" value="Cyt-b5"/>
    <property type="match status" value="1"/>
</dbReference>
<dbReference type="Pfam" id="PF00487">
    <property type="entry name" value="FA_desaturase"/>
    <property type="match status" value="1"/>
</dbReference>
<dbReference type="PIRSF" id="PIRSF015921">
    <property type="entry name" value="FA_sphinglp_des"/>
    <property type="match status" value="1"/>
</dbReference>
<dbReference type="SMART" id="SM01117">
    <property type="entry name" value="Cyt-b5"/>
    <property type="match status" value="1"/>
</dbReference>
<dbReference type="SUPFAM" id="SSF55856">
    <property type="entry name" value="Cytochrome b5-like heme/steroid binding domain"/>
    <property type="match status" value="1"/>
</dbReference>
<dbReference type="PROSITE" id="PS50255">
    <property type="entry name" value="CYTOCHROME_B5_2"/>
    <property type="match status" value="1"/>
</dbReference>
<proteinExistence type="evidence at protein level"/>
<gene>
    <name type="primary">SLD2</name>
    <name type="ordered locus">At2g46210</name>
    <name type="ORF">T3F17.14</name>
</gene>
<accession>Q3EBF7</accession>
<keyword id="KW-0249">Electron transport</keyword>
<keyword id="KW-0256">Endoplasmic reticulum</keyword>
<keyword id="KW-0349">Heme</keyword>
<keyword id="KW-0408">Iron</keyword>
<keyword id="KW-0443">Lipid metabolism</keyword>
<keyword id="KW-0472">Membrane</keyword>
<keyword id="KW-0479">Metal-binding</keyword>
<keyword id="KW-0560">Oxidoreductase</keyword>
<keyword id="KW-1185">Reference proteome</keyword>
<keyword id="KW-0746">Sphingolipid metabolism</keyword>
<keyword id="KW-0812">Transmembrane</keyword>
<keyword id="KW-1133">Transmembrane helix</keyword>
<keyword id="KW-0813">Transport</keyword>
<reference key="1">
    <citation type="journal article" date="1999" name="Nature">
        <title>Sequence and analysis of chromosome 2 of the plant Arabidopsis thaliana.</title>
        <authorList>
            <person name="Lin X."/>
            <person name="Kaul S."/>
            <person name="Rounsley S.D."/>
            <person name="Shea T.P."/>
            <person name="Benito M.-I."/>
            <person name="Town C.D."/>
            <person name="Fujii C.Y."/>
            <person name="Mason T.M."/>
            <person name="Bowman C.L."/>
            <person name="Barnstead M.E."/>
            <person name="Feldblyum T.V."/>
            <person name="Buell C.R."/>
            <person name="Ketchum K.A."/>
            <person name="Lee J.J."/>
            <person name="Ronning C.M."/>
            <person name="Koo H.L."/>
            <person name="Moffat K.S."/>
            <person name="Cronin L.A."/>
            <person name="Shen M."/>
            <person name="Pai G."/>
            <person name="Van Aken S."/>
            <person name="Umayam L."/>
            <person name="Tallon L.J."/>
            <person name="Gill J.E."/>
            <person name="Adams M.D."/>
            <person name="Carrera A.J."/>
            <person name="Creasy T.H."/>
            <person name="Goodman H.M."/>
            <person name="Somerville C.R."/>
            <person name="Copenhaver G.P."/>
            <person name="Preuss D."/>
            <person name="Nierman W.C."/>
            <person name="White O."/>
            <person name="Eisen J.A."/>
            <person name="Salzberg S.L."/>
            <person name="Fraser C.M."/>
            <person name="Venter J.C."/>
        </authorList>
    </citation>
    <scope>NUCLEOTIDE SEQUENCE [LARGE SCALE GENOMIC DNA]</scope>
    <source>
        <strain>cv. Columbia</strain>
    </source>
</reference>
<reference key="2">
    <citation type="journal article" date="2017" name="Plant J.">
        <title>Araport11: a complete reannotation of the Arabidopsis thaliana reference genome.</title>
        <authorList>
            <person name="Cheng C.Y."/>
            <person name="Krishnakumar V."/>
            <person name="Chan A.P."/>
            <person name="Thibaud-Nissen F."/>
            <person name="Schobel S."/>
            <person name="Town C.D."/>
        </authorList>
    </citation>
    <scope>GENOME REANNOTATION</scope>
    <source>
        <strain>cv. Columbia</strain>
    </source>
</reference>
<reference key="3">
    <citation type="submission" date="2006-07" db="EMBL/GenBank/DDBJ databases">
        <title>Large-scale analysis of RIKEN Arabidopsis full-length (RAFL) cDNAs.</title>
        <authorList>
            <person name="Totoki Y."/>
            <person name="Seki M."/>
            <person name="Ishida J."/>
            <person name="Nakajima M."/>
            <person name="Enju A."/>
            <person name="Kamiya A."/>
            <person name="Narusaka M."/>
            <person name="Shin-i T."/>
            <person name="Nakagawa M."/>
            <person name="Sakamoto N."/>
            <person name="Oishi K."/>
            <person name="Kohara Y."/>
            <person name="Kobayashi M."/>
            <person name="Toyoda A."/>
            <person name="Sakaki Y."/>
            <person name="Sakurai T."/>
            <person name="Iida K."/>
            <person name="Akiyama K."/>
            <person name="Satou M."/>
            <person name="Toyoda T."/>
            <person name="Konagaya A."/>
            <person name="Carninci P."/>
            <person name="Kawai J."/>
            <person name="Hayashizaki Y."/>
            <person name="Shinozaki K."/>
        </authorList>
    </citation>
    <scope>NUCLEOTIDE SEQUENCE [LARGE SCALE MRNA]</scope>
    <source>
        <strain>cv. Columbia</strain>
    </source>
</reference>
<reference key="4">
    <citation type="journal article" date="2012" name="Plant J.">
        <title>Sphingolipid Delta8 unsaturation is important for glucosylceramide biosynthesis and low-temperature performance in Arabidopsis.</title>
        <authorList>
            <person name="Chen M."/>
            <person name="Markham J.E."/>
            <person name="Cahoon E.B."/>
        </authorList>
    </citation>
    <scope>FUNCTION</scope>
    <scope>CATALYTIC ACTIVITY</scope>
    <scope>SUBCELLULAR LOCATION</scope>
    <scope>TISSUE SPECIFICITY</scope>
    <scope>DISRUPTION PHENOTYPE</scope>
</reference>
<organism>
    <name type="scientific">Arabidopsis thaliana</name>
    <name type="common">Mouse-ear cress</name>
    <dbReference type="NCBI Taxonomy" id="3702"/>
    <lineage>
        <taxon>Eukaryota</taxon>
        <taxon>Viridiplantae</taxon>
        <taxon>Streptophyta</taxon>
        <taxon>Embryophyta</taxon>
        <taxon>Tracheophyta</taxon>
        <taxon>Spermatophyta</taxon>
        <taxon>Magnoliopsida</taxon>
        <taxon>eudicotyledons</taxon>
        <taxon>Gunneridae</taxon>
        <taxon>Pentapetalae</taxon>
        <taxon>rosids</taxon>
        <taxon>malvids</taxon>
        <taxon>Brassicales</taxon>
        <taxon>Brassicaceae</taxon>
        <taxon>Camelineae</taxon>
        <taxon>Arabidopsis</taxon>
    </lineage>
</organism>
<name>SLD2_ARATH</name>
<feature type="chain" id="PRO_0000429374" description="Delta(8)-fatty-acid desaturase 2">
    <location>
        <begin position="1"/>
        <end position="449"/>
    </location>
</feature>
<feature type="transmembrane region" description="Helical" evidence="2">
    <location>
        <begin position="113"/>
        <end position="133"/>
    </location>
</feature>
<feature type="transmembrane region" description="Helical" evidence="2">
    <location>
        <begin position="138"/>
        <end position="158"/>
    </location>
</feature>
<feature type="transmembrane region" description="Helical" evidence="2">
    <location>
        <begin position="176"/>
        <end position="196"/>
    </location>
</feature>
<feature type="transmembrane region" description="Helical" evidence="2">
    <location>
        <begin position="255"/>
        <end position="275"/>
    </location>
</feature>
<feature type="transmembrane region" description="Helical" evidence="2">
    <location>
        <begin position="284"/>
        <end position="304"/>
    </location>
</feature>
<feature type="transmembrane region" description="Helical" evidence="2">
    <location>
        <begin position="311"/>
        <end position="331"/>
    </location>
</feature>
<feature type="domain" description="Cytochrome b5 heme-binding" evidence="3">
    <location>
        <begin position="7"/>
        <end position="91"/>
    </location>
</feature>
<feature type="short sequence motif" description="Histidine box-1" evidence="5">
    <location>
        <begin position="160"/>
        <end position="164"/>
    </location>
</feature>
<feature type="short sequence motif" description="Histidine box-2" evidence="5">
    <location>
        <begin position="197"/>
        <end position="201"/>
    </location>
</feature>
<feature type="short sequence motif" description="Histidine box-3" evidence="5">
    <location>
        <begin position="374"/>
        <end position="378"/>
    </location>
</feature>
<feature type="binding site" description="axial binding residue" evidence="3">
    <location>
        <position position="42"/>
    </location>
    <ligand>
        <name>heme</name>
        <dbReference type="ChEBI" id="CHEBI:30413"/>
    </ligand>
    <ligandPart>
        <name>Fe</name>
        <dbReference type="ChEBI" id="CHEBI:18248"/>
    </ligandPart>
</feature>
<feature type="binding site" description="axial binding residue" evidence="3">
    <location>
        <position position="65"/>
    </location>
    <ligand>
        <name>heme</name>
        <dbReference type="ChEBI" id="CHEBI:30413"/>
    </ligand>
    <ligandPart>
        <name>Fe</name>
        <dbReference type="ChEBI" id="CHEBI:18248"/>
    </ligandPart>
</feature>
<feature type="sequence conflict" description="In Ref. 3; AK228217." evidence="5" ref="3">
    <original>Q</original>
    <variation>R</variation>
    <location>
        <position position="372"/>
    </location>
</feature>